<reference key="1">
    <citation type="journal article" date="2010" name="Appl. Environ. Microbiol.">
        <title>Conserved symbiotic plasmid DNA sequences in the multireplicon pangenomic structure of Rhizobium etli.</title>
        <authorList>
            <person name="Gonzalez V."/>
            <person name="Acosta J.L."/>
            <person name="Santamaria R.I."/>
            <person name="Bustos P."/>
            <person name="Fernandez J.L."/>
            <person name="Hernandez Gonzalez I.L."/>
            <person name="Diaz R."/>
            <person name="Flores M."/>
            <person name="Palacios R."/>
            <person name="Mora J."/>
            <person name="Davila G."/>
        </authorList>
    </citation>
    <scope>NUCLEOTIDE SEQUENCE [LARGE SCALE GENOMIC DNA]</scope>
    <source>
        <strain>CIAT 652</strain>
    </source>
</reference>
<proteinExistence type="inferred from homology"/>
<accession>B3PWS5</accession>
<sequence>MARSVWKGPFVDGYLLKKAEKVREGGRAEVIKIWSRRSTILPQFVGLTFGVYNGSKHIPVSVNEDMVGHKFGEFSPTRTYYGHGADKKAKRK</sequence>
<dbReference type="EMBL" id="CP001074">
    <property type="protein sequence ID" value="ACE90723.1"/>
    <property type="molecule type" value="Genomic_DNA"/>
</dbReference>
<dbReference type="SMR" id="B3PWS5"/>
<dbReference type="KEGG" id="rec:RHECIAT_CH0001753"/>
<dbReference type="eggNOG" id="COG0185">
    <property type="taxonomic scope" value="Bacteria"/>
</dbReference>
<dbReference type="HOGENOM" id="CLU_144911_0_1_5"/>
<dbReference type="Proteomes" id="UP000008817">
    <property type="component" value="Chromosome"/>
</dbReference>
<dbReference type="GO" id="GO:0005737">
    <property type="term" value="C:cytoplasm"/>
    <property type="evidence" value="ECO:0007669"/>
    <property type="project" value="UniProtKB-ARBA"/>
</dbReference>
<dbReference type="GO" id="GO:0015935">
    <property type="term" value="C:small ribosomal subunit"/>
    <property type="evidence" value="ECO:0007669"/>
    <property type="project" value="InterPro"/>
</dbReference>
<dbReference type="GO" id="GO:0019843">
    <property type="term" value="F:rRNA binding"/>
    <property type="evidence" value="ECO:0007669"/>
    <property type="project" value="UniProtKB-UniRule"/>
</dbReference>
<dbReference type="GO" id="GO:0003735">
    <property type="term" value="F:structural constituent of ribosome"/>
    <property type="evidence" value="ECO:0007669"/>
    <property type="project" value="InterPro"/>
</dbReference>
<dbReference type="GO" id="GO:0000028">
    <property type="term" value="P:ribosomal small subunit assembly"/>
    <property type="evidence" value="ECO:0007669"/>
    <property type="project" value="TreeGrafter"/>
</dbReference>
<dbReference type="GO" id="GO:0006412">
    <property type="term" value="P:translation"/>
    <property type="evidence" value="ECO:0007669"/>
    <property type="project" value="UniProtKB-UniRule"/>
</dbReference>
<dbReference type="FunFam" id="3.30.860.10:FF:000001">
    <property type="entry name" value="30S ribosomal protein S19"/>
    <property type="match status" value="1"/>
</dbReference>
<dbReference type="Gene3D" id="3.30.860.10">
    <property type="entry name" value="30s Ribosomal Protein S19, Chain A"/>
    <property type="match status" value="1"/>
</dbReference>
<dbReference type="HAMAP" id="MF_00531">
    <property type="entry name" value="Ribosomal_uS19"/>
    <property type="match status" value="1"/>
</dbReference>
<dbReference type="InterPro" id="IPR002222">
    <property type="entry name" value="Ribosomal_uS19"/>
</dbReference>
<dbReference type="InterPro" id="IPR005732">
    <property type="entry name" value="Ribosomal_uS19_bac-type"/>
</dbReference>
<dbReference type="InterPro" id="IPR020934">
    <property type="entry name" value="Ribosomal_uS19_CS"/>
</dbReference>
<dbReference type="InterPro" id="IPR023575">
    <property type="entry name" value="Ribosomal_uS19_SF"/>
</dbReference>
<dbReference type="NCBIfam" id="TIGR01050">
    <property type="entry name" value="rpsS_bact"/>
    <property type="match status" value="1"/>
</dbReference>
<dbReference type="PANTHER" id="PTHR11880">
    <property type="entry name" value="RIBOSOMAL PROTEIN S19P FAMILY MEMBER"/>
    <property type="match status" value="1"/>
</dbReference>
<dbReference type="PANTHER" id="PTHR11880:SF8">
    <property type="entry name" value="SMALL RIBOSOMAL SUBUNIT PROTEIN US19M"/>
    <property type="match status" value="1"/>
</dbReference>
<dbReference type="Pfam" id="PF00203">
    <property type="entry name" value="Ribosomal_S19"/>
    <property type="match status" value="1"/>
</dbReference>
<dbReference type="PIRSF" id="PIRSF002144">
    <property type="entry name" value="Ribosomal_S19"/>
    <property type="match status" value="1"/>
</dbReference>
<dbReference type="PRINTS" id="PR00975">
    <property type="entry name" value="RIBOSOMALS19"/>
</dbReference>
<dbReference type="SUPFAM" id="SSF54570">
    <property type="entry name" value="Ribosomal protein S19"/>
    <property type="match status" value="1"/>
</dbReference>
<dbReference type="PROSITE" id="PS00323">
    <property type="entry name" value="RIBOSOMAL_S19"/>
    <property type="match status" value="1"/>
</dbReference>
<name>RS19_RHIE6</name>
<keyword id="KW-0687">Ribonucleoprotein</keyword>
<keyword id="KW-0689">Ribosomal protein</keyword>
<keyword id="KW-0694">RNA-binding</keyword>
<keyword id="KW-0699">rRNA-binding</keyword>
<feature type="chain" id="PRO_1000128024" description="Small ribosomal subunit protein uS19">
    <location>
        <begin position="1"/>
        <end position="92"/>
    </location>
</feature>
<evidence type="ECO:0000255" key="1">
    <source>
        <dbReference type="HAMAP-Rule" id="MF_00531"/>
    </source>
</evidence>
<evidence type="ECO:0000305" key="2"/>
<protein>
    <recommendedName>
        <fullName evidence="1">Small ribosomal subunit protein uS19</fullName>
    </recommendedName>
    <alternativeName>
        <fullName evidence="2">30S ribosomal protein S19</fullName>
    </alternativeName>
</protein>
<organism>
    <name type="scientific">Rhizobium etli (strain CIAT 652)</name>
    <dbReference type="NCBI Taxonomy" id="491916"/>
    <lineage>
        <taxon>Bacteria</taxon>
        <taxon>Pseudomonadati</taxon>
        <taxon>Pseudomonadota</taxon>
        <taxon>Alphaproteobacteria</taxon>
        <taxon>Hyphomicrobiales</taxon>
        <taxon>Rhizobiaceae</taxon>
        <taxon>Rhizobium/Agrobacterium group</taxon>
        <taxon>Rhizobium</taxon>
    </lineage>
</organism>
<comment type="function">
    <text evidence="1">Protein S19 forms a complex with S13 that binds strongly to the 16S ribosomal RNA.</text>
</comment>
<comment type="similarity">
    <text evidence="1">Belongs to the universal ribosomal protein uS19 family.</text>
</comment>
<gene>
    <name evidence="1" type="primary">rpsS</name>
    <name type="ordered locus">RHECIAT_CH0001753</name>
</gene>